<organism>
    <name type="scientific">Escherichia coli (strain K12)</name>
    <dbReference type="NCBI Taxonomy" id="83333"/>
    <lineage>
        <taxon>Bacteria</taxon>
        <taxon>Pseudomonadati</taxon>
        <taxon>Pseudomonadota</taxon>
        <taxon>Gammaproteobacteria</taxon>
        <taxon>Enterobacterales</taxon>
        <taxon>Enterobacteriaceae</taxon>
        <taxon>Escherichia</taxon>
    </lineage>
</organism>
<comment type="catalytic activity">
    <reaction>
        <text>(6R)-10-formyltetrahydrofolate + 5-amino-1-(5-phospho-beta-D-ribosyl)imidazole-4-carboxamide = 5-formamido-1-(5-phospho-D-ribosyl)imidazole-4-carboxamide + (6S)-5,6,7,8-tetrahydrofolate</text>
        <dbReference type="Rhea" id="RHEA:22192"/>
        <dbReference type="ChEBI" id="CHEBI:57453"/>
        <dbReference type="ChEBI" id="CHEBI:58467"/>
        <dbReference type="ChEBI" id="CHEBI:58475"/>
        <dbReference type="ChEBI" id="CHEBI:195366"/>
        <dbReference type="EC" id="2.1.2.3"/>
    </reaction>
</comment>
<comment type="catalytic activity">
    <reaction>
        <text>IMP + H2O = 5-formamido-1-(5-phospho-D-ribosyl)imidazole-4-carboxamide</text>
        <dbReference type="Rhea" id="RHEA:18445"/>
        <dbReference type="ChEBI" id="CHEBI:15377"/>
        <dbReference type="ChEBI" id="CHEBI:58053"/>
        <dbReference type="ChEBI" id="CHEBI:58467"/>
        <dbReference type="EC" id="3.5.4.10"/>
    </reaction>
</comment>
<comment type="pathway">
    <text>Purine metabolism; IMP biosynthesis via de novo pathway; 5-formamido-1-(5-phospho-D-ribosyl)imidazole-4-carboxamide from 5-amino-1-(5-phospho-D-ribosyl)imidazole-4-carboxamide (10-formyl THF route): step 1/1.</text>
</comment>
<comment type="pathway">
    <text>Purine metabolism; IMP biosynthesis via de novo pathway; IMP from 5-formamido-1-(5-phospho-D-ribosyl)imidazole-4-carboxamide: step 1/1.</text>
</comment>
<comment type="domain">
    <text evidence="1">The IMP cyclohydrolase activity resides in the N-terminal region.</text>
</comment>
<comment type="similarity">
    <text evidence="4">Belongs to the PurH family.</text>
</comment>
<sequence>MQQRRPVRRALLSVSDKAGIVEFAQALSARGVELLSTGGTARLLAEKGLPVTEVSDYTGFPEMMDGRVKTLHPKVHGGILGRRGQDDAIMEEHQIQPIDMVVVNLYPFAQTVAREGCSLEDAVENIDIGGPTMVRSAAKNHKDVAIVVKSSDYDAIIKEMDDNEGSLTLATRFDLAIKAFEHTAAYDSMIANYFGSMVPAYHGESKEAAGRFPRTLNLNFIKKLDMRYGENSHQQAAFYIEENVKEASVATATQVQGKALSYNNIADTDAALECVKEFAEPACVIVKHANPCGVAIGNSILDAYDRAYKTDPTSAFGGIIAFNRELDAETAQAIISRQFVEVIIAPSASEEALKITAAKQNVRVLTCGQWGERVPGLDFKRVNGGLLVQDRDLGMVGAEELRVVTKRQPSEQELRDALFCWKVAKFVKSNAIVYAKNNMTIGIGAGQMSRVYSAKIAGIKAADEGLEVKGSSMASDAFFPFRDGIDAAAAAGVTCVIQPGGSIRDDEVIAAADEHGIAMLFTDMRHFRH</sequence>
<feature type="chain" id="PRO_0000192091" description="Bifunctional purine biosynthesis protein PurH">
    <location>
        <begin position="1"/>
        <end position="529"/>
    </location>
</feature>
<feature type="domain" description="MGS-like" evidence="2">
    <location>
        <begin position="1"/>
        <end position="148"/>
    </location>
</feature>
<feature type="modified residue" description="N6-acetyllysine" evidence="3">
    <location>
        <position position="287"/>
    </location>
</feature>
<reference key="1">
    <citation type="journal article" date="1989" name="J. Biol. Chem.">
        <title>Nucleotide sequence analysis of genes purH and purD involved in the de novo purine nucleotide biosynthesis of Escherichia coli.</title>
        <authorList>
            <person name="Aiba A."/>
            <person name="Mizobuchi K."/>
        </authorList>
    </citation>
    <scope>NUCLEOTIDE SEQUENCE [GENOMIC DNA]</scope>
</reference>
<reference key="2">
    <citation type="journal article" date="1990" name="Mol. Microbiol.">
        <title>Purine biosynthesis in Escherichia coli K12: structure and DNA sequence studies of the purHD locus.</title>
        <authorList>
            <person name="Flannigan K.A."/>
            <person name="Hennigan S.H."/>
            <person name="Vogelbacker H.H."/>
            <person name="Gots J.S."/>
            <person name="Smith J.M."/>
        </authorList>
    </citation>
    <scope>NUCLEOTIDE SEQUENCE [GENOMIC DNA]</scope>
    <source>
        <strain>K12</strain>
    </source>
</reference>
<reference key="3">
    <citation type="journal article" date="1993" name="Nucleic Acids Res.">
        <title>Analysis of the Escherichia coli genome. IV. DNA sequence of the region from 89.2 to 92.8 minutes.</title>
        <authorList>
            <person name="Blattner F.R."/>
            <person name="Burland V.D."/>
            <person name="Plunkett G. III"/>
            <person name="Sofia H.J."/>
            <person name="Daniels D.L."/>
        </authorList>
    </citation>
    <scope>NUCLEOTIDE SEQUENCE [LARGE SCALE GENOMIC DNA]</scope>
    <source>
        <strain>K12 / MG1655 / ATCC 47076</strain>
    </source>
</reference>
<reference key="4">
    <citation type="journal article" date="1997" name="Science">
        <title>The complete genome sequence of Escherichia coli K-12.</title>
        <authorList>
            <person name="Blattner F.R."/>
            <person name="Plunkett G. III"/>
            <person name="Bloch C.A."/>
            <person name="Perna N.T."/>
            <person name="Burland V."/>
            <person name="Riley M."/>
            <person name="Collado-Vides J."/>
            <person name="Glasner J.D."/>
            <person name="Rode C.K."/>
            <person name="Mayhew G.F."/>
            <person name="Gregor J."/>
            <person name="Davis N.W."/>
            <person name="Kirkpatrick H.A."/>
            <person name="Goeden M.A."/>
            <person name="Rose D.J."/>
            <person name="Mau B."/>
            <person name="Shao Y."/>
        </authorList>
    </citation>
    <scope>NUCLEOTIDE SEQUENCE [LARGE SCALE GENOMIC DNA]</scope>
    <source>
        <strain>K12 / MG1655 / ATCC 47076</strain>
    </source>
</reference>
<reference key="5">
    <citation type="journal article" date="2006" name="Mol. Syst. Biol.">
        <title>Highly accurate genome sequences of Escherichia coli K-12 strains MG1655 and W3110.</title>
        <authorList>
            <person name="Hayashi K."/>
            <person name="Morooka N."/>
            <person name="Yamamoto Y."/>
            <person name="Fujita K."/>
            <person name="Isono K."/>
            <person name="Choi S."/>
            <person name="Ohtsubo E."/>
            <person name="Baba T."/>
            <person name="Wanner B.L."/>
            <person name="Mori H."/>
            <person name="Horiuchi T."/>
        </authorList>
    </citation>
    <scope>NUCLEOTIDE SEQUENCE [LARGE SCALE GENOMIC DNA]</scope>
    <source>
        <strain>K12 / W3110 / ATCC 27325 / DSM 5911</strain>
    </source>
</reference>
<reference key="6">
    <citation type="journal article" date="1997" name="Electrophoresis">
        <title>Comparing the predicted and observed properties of proteins encoded in the genome of Escherichia coli K-12.</title>
        <authorList>
            <person name="Link A.J."/>
            <person name="Robison K."/>
            <person name="Church G.M."/>
        </authorList>
    </citation>
    <scope>PROTEIN SEQUENCE OF 1-12</scope>
    <source>
        <strain>K12 / EMG2</strain>
    </source>
</reference>
<reference key="7">
    <citation type="journal article" date="2009" name="Mol. Cell. Proteomics">
        <title>Lysine acetylation is a highly abundant and evolutionarily conserved modification in Escherichia coli.</title>
        <authorList>
            <person name="Zhang J."/>
            <person name="Sprung R."/>
            <person name="Pei J."/>
            <person name="Tan X."/>
            <person name="Kim S."/>
            <person name="Zhu H."/>
            <person name="Liu C.F."/>
            <person name="Grishin N.V."/>
            <person name="Zhao Y."/>
        </authorList>
    </citation>
    <scope>ACETYLATION [LARGE SCALE ANALYSIS] AT LYS-287</scope>
    <scope>IDENTIFICATION BY MASS SPECTROMETRY</scope>
    <source>
        <strain>K12 / JW1106</strain>
        <strain>K12 / MG1655 / ATCC 47076</strain>
    </source>
</reference>
<protein>
    <recommendedName>
        <fullName>Bifunctional purine biosynthesis protein PurH</fullName>
    </recommendedName>
    <domain>
        <recommendedName>
            <fullName>Phosphoribosylaminoimidazolecarboxamide formyltransferase</fullName>
            <ecNumber>2.1.2.3</ecNumber>
        </recommendedName>
        <alternativeName>
            <fullName>AICAR transformylase</fullName>
        </alternativeName>
    </domain>
    <domain>
        <recommendedName>
            <fullName>IMP cyclohydrolase</fullName>
            <ecNumber>3.5.4.10</ecNumber>
        </recommendedName>
        <alternativeName>
            <fullName>ATIC</fullName>
        </alternativeName>
        <alternativeName>
            <fullName>IMP synthase</fullName>
        </alternativeName>
        <alternativeName>
            <fullName>Inosinicase</fullName>
        </alternativeName>
    </domain>
</protein>
<keyword id="KW-0007">Acetylation</keyword>
<keyword id="KW-0903">Direct protein sequencing</keyword>
<keyword id="KW-0378">Hydrolase</keyword>
<keyword id="KW-0511">Multifunctional enzyme</keyword>
<keyword id="KW-0658">Purine biosynthesis</keyword>
<keyword id="KW-1185">Reference proteome</keyword>
<keyword id="KW-0808">Transferase</keyword>
<gene>
    <name type="primary">purH</name>
    <name type="ordered locus">b4006</name>
    <name type="ordered locus">JW3970</name>
</gene>
<evidence type="ECO:0000250" key="1"/>
<evidence type="ECO:0000255" key="2">
    <source>
        <dbReference type="PROSITE-ProRule" id="PRU01202"/>
    </source>
</evidence>
<evidence type="ECO:0000269" key="3">
    <source>
    </source>
</evidence>
<evidence type="ECO:0000305" key="4"/>
<dbReference type="EC" id="2.1.2.3"/>
<dbReference type="EC" id="3.5.4.10"/>
<dbReference type="EMBL" id="J05126">
    <property type="protein sequence ID" value="AAA24454.1"/>
    <property type="molecule type" value="Genomic_DNA"/>
</dbReference>
<dbReference type="EMBL" id="X51950">
    <property type="protein sequence ID" value="CAA36212.1"/>
    <property type="molecule type" value="Genomic_DNA"/>
</dbReference>
<dbReference type="EMBL" id="U00006">
    <property type="protein sequence ID" value="AAC43104.1"/>
    <property type="molecule type" value="Genomic_DNA"/>
</dbReference>
<dbReference type="EMBL" id="U00096">
    <property type="protein sequence ID" value="AAC76980.1"/>
    <property type="molecule type" value="Genomic_DNA"/>
</dbReference>
<dbReference type="EMBL" id="AP009048">
    <property type="protein sequence ID" value="BAE77313.1"/>
    <property type="molecule type" value="Genomic_DNA"/>
</dbReference>
<dbReference type="PIR" id="B34193">
    <property type="entry name" value="DTECPH"/>
</dbReference>
<dbReference type="RefSeq" id="NP_418434.1">
    <property type="nucleotide sequence ID" value="NC_000913.3"/>
</dbReference>
<dbReference type="RefSeq" id="WP_001187559.1">
    <property type="nucleotide sequence ID" value="NZ_SSZK01000047.1"/>
</dbReference>
<dbReference type="SMR" id="P15639"/>
<dbReference type="BioGRID" id="4262461">
    <property type="interactions" value="81"/>
</dbReference>
<dbReference type="BioGRID" id="852797">
    <property type="interactions" value="3"/>
</dbReference>
<dbReference type="FunCoup" id="P15639">
    <property type="interactions" value="820"/>
</dbReference>
<dbReference type="IntAct" id="P15639">
    <property type="interactions" value="7"/>
</dbReference>
<dbReference type="STRING" id="511145.b4006"/>
<dbReference type="iPTMnet" id="P15639"/>
<dbReference type="jPOST" id="P15639"/>
<dbReference type="PaxDb" id="511145-b4006"/>
<dbReference type="EnsemblBacteria" id="AAC76980">
    <property type="protein sequence ID" value="AAC76980"/>
    <property type="gene ID" value="b4006"/>
</dbReference>
<dbReference type="GeneID" id="948503"/>
<dbReference type="KEGG" id="ecj:JW3970"/>
<dbReference type="KEGG" id="eco:b4006"/>
<dbReference type="KEGG" id="ecoc:C3026_21635"/>
<dbReference type="PATRIC" id="fig|1411691.4.peg.2704"/>
<dbReference type="EchoBASE" id="EB0788"/>
<dbReference type="eggNOG" id="COG0138">
    <property type="taxonomic scope" value="Bacteria"/>
</dbReference>
<dbReference type="HOGENOM" id="CLU_016316_5_2_6"/>
<dbReference type="InParanoid" id="P15639"/>
<dbReference type="OMA" id="IKHNNPC"/>
<dbReference type="OrthoDB" id="9802065at2"/>
<dbReference type="PhylomeDB" id="P15639"/>
<dbReference type="BioCyc" id="EcoCyc:AICARTRANSIMPCYCLO-CPLX"/>
<dbReference type="BioCyc" id="MetaCyc:AICARTRANSIMPCYCLO-CPLX"/>
<dbReference type="BRENDA" id="2.1.2.3">
    <property type="organism ID" value="2026"/>
</dbReference>
<dbReference type="BRENDA" id="3.5.4.10">
    <property type="organism ID" value="2026"/>
</dbReference>
<dbReference type="UniPathway" id="UPA00074">
    <property type="reaction ID" value="UER00133"/>
</dbReference>
<dbReference type="UniPathway" id="UPA00074">
    <property type="reaction ID" value="UER00135"/>
</dbReference>
<dbReference type="PRO" id="PR:P15639"/>
<dbReference type="Proteomes" id="UP000000625">
    <property type="component" value="Chromosome"/>
</dbReference>
<dbReference type="GO" id="GO:0005829">
    <property type="term" value="C:cytosol"/>
    <property type="evidence" value="ECO:0000314"/>
    <property type="project" value="EcoCyc"/>
</dbReference>
<dbReference type="GO" id="GO:0003937">
    <property type="term" value="F:IMP cyclohydrolase activity"/>
    <property type="evidence" value="ECO:0000269"/>
    <property type="project" value="EcoCyc"/>
</dbReference>
<dbReference type="GO" id="GO:0004643">
    <property type="term" value="F:phosphoribosylaminoimidazolecarboxamide formyltransferase activity"/>
    <property type="evidence" value="ECO:0000269"/>
    <property type="project" value="EcoCyc"/>
</dbReference>
<dbReference type="GO" id="GO:0006189">
    <property type="term" value="P:'de novo' IMP biosynthetic process"/>
    <property type="evidence" value="ECO:0000318"/>
    <property type="project" value="GO_Central"/>
</dbReference>
<dbReference type="CDD" id="cd01421">
    <property type="entry name" value="IMPCH"/>
    <property type="match status" value="1"/>
</dbReference>
<dbReference type="FunFam" id="3.40.140.20:FF:000001">
    <property type="entry name" value="Bifunctional purine biosynthesis protein PurH"/>
    <property type="match status" value="1"/>
</dbReference>
<dbReference type="FunFam" id="3.40.140.20:FF:000002">
    <property type="entry name" value="Bifunctional purine biosynthesis protein PurH"/>
    <property type="match status" value="1"/>
</dbReference>
<dbReference type="FunFam" id="3.40.50.1380:FF:000001">
    <property type="entry name" value="Bifunctional purine biosynthesis protein PurH"/>
    <property type="match status" value="1"/>
</dbReference>
<dbReference type="Gene3D" id="3.40.140.20">
    <property type="match status" value="2"/>
</dbReference>
<dbReference type="Gene3D" id="3.40.50.1380">
    <property type="entry name" value="Methylglyoxal synthase-like domain"/>
    <property type="match status" value="1"/>
</dbReference>
<dbReference type="HAMAP" id="MF_00139">
    <property type="entry name" value="PurH"/>
    <property type="match status" value="1"/>
</dbReference>
<dbReference type="InterPro" id="IPR024051">
    <property type="entry name" value="AICAR_Tfase_dup_dom_sf"/>
</dbReference>
<dbReference type="InterPro" id="IPR016193">
    <property type="entry name" value="Cytidine_deaminase-like"/>
</dbReference>
<dbReference type="InterPro" id="IPR011607">
    <property type="entry name" value="MGS-like_dom"/>
</dbReference>
<dbReference type="InterPro" id="IPR036914">
    <property type="entry name" value="MGS-like_dom_sf"/>
</dbReference>
<dbReference type="InterPro" id="IPR002695">
    <property type="entry name" value="PurH-like"/>
</dbReference>
<dbReference type="NCBIfam" id="NF002049">
    <property type="entry name" value="PRK00881.1"/>
    <property type="match status" value="1"/>
</dbReference>
<dbReference type="NCBIfam" id="TIGR00355">
    <property type="entry name" value="purH"/>
    <property type="match status" value="1"/>
</dbReference>
<dbReference type="PANTHER" id="PTHR11692:SF0">
    <property type="entry name" value="BIFUNCTIONAL PURINE BIOSYNTHESIS PROTEIN ATIC"/>
    <property type="match status" value="1"/>
</dbReference>
<dbReference type="PANTHER" id="PTHR11692">
    <property type="entry name" value="BIFUNCTIONAL PURINE BIOSYNTHESIS PROTEIN PURH"/>
    <property type="match status" value="1"/>
</dbReference>
<dbReference type="Pfam" id="PF01808">
    <property type="entry name" value="AICARFT_IMPCHas"/>
    <property type="match status" value="1"/>
</dbReference>
<dbReference type="Pfam" id="PF02142">
    <property type="entry name" value="MGS"/>
    <property type="match status" value="1"/>
</dbReference>
<dbReference type="PIRSF" id="PIRSF000414">
    <property type="entry name" value="AICARFT_IMPCHas"/>
    <property type="match status" value="1"/>
</dbReference>
<dbReference type="SMART" id="SM00798">
    <property type="entry name" value="AICARFT_IMPCHas"/>
    <property type="match status" value="1"/>
</dbReference>
<dbReference type="SMART" id="SM00851">
    <property type="entry name" value="MGS"/>
    <property type="match status" value="1"/>
</dbReference>
<dbReference type="SUPFAM" id="SSF53927">
    <property type="entry name" value="Cytidine deaminase-like"/>
    <property type="match status" value="1"/>
</dbReference>
<dbReference type="SUPFAM" id="SSF52335">
    <property type="entry name" value="Methylglyoxal synthase-like"/>
    <property type="match status" value="1"/>
</dbReference>
<dbReference type="PROSITE" id="PS51855">
    <property type="entry name" value="MGS"/>
    <property type="match status" value="1"/>
</dbReference>
<proteinExistence type="evidence at protein level"/>
<accession>P15639</accession>
<accession>Q2M8U3</accession>
<name>PUR9_ECOLI</name>